<gene>
    <name evidence="4" type="primary">br2GHb</name>
</gene>
<name>BR2B_SYLGU</name>
<dbReference type="EMBL" id="AM262989">
    <property type="protein sequence ID" value="CAK18909.1"/>
    <property type="molecule type" value="mRNA"/>
</dbReference>
<dbReference type="SMR" id="A0AEI5"/>
<dbReference type="GO" id="GO:0005576">
    <property type="term" value="C:extracellular region"/>
    <property type="evidence" value="ECO:0007669"/>
    <property type="project" value="UniProtKB-SubCell"/>
</dbReference>
<dbReference type="GO" id="GO:0042742">
    <property type="term" value="P:defense response to bacterium"/>
    <property type="evidence" value="ECO:0007669"/>
    <property type="project" value="UniProtKB-KW"/>
</dbReference>
<dbReference type="InterPro" id="IPR004275">
    <property type="entry name" value="Frog_antimicrobial_propeptide"/>
</dbReference>
<dbReference type="Pfam" id="PF03032">
    <property type="entry name" value="FSAP_sig_propep"/>
    <property type="match status" value="1"/>
</dbReference>
<keyword id="KW-0878">Amphibian defense peptide</keyword>
<keyword id="KW-0044">Antibiotic</keyword>
<keyword id="KW-0929">Antimicrobial</keyword>
<keyword id="KW-0165">Cleavage on pair of basic residues</keyword>
<keyword id="KW-0903">Direct protein sequencing</keyword>
<keyword id="KW-1015">Disulfide bond</keyword>
<keyword id="KW-0964">Secreted</keyword>
<keyword id="KW-0732">Signal</keyword>
<evidence type="ECO:0000255" key="1"/>
<evidence type="ECO:0000269" key="2">
    <source>
    </source>
</evidence>
<evidence type="ECO:0000305" key="3"/>
<evidence type="ECO:0000312" key="4">
    <source>
        <dbReference type="EMBL" id="CAK18909.1"/>
    </source>
</evidence>
<organism>
    <name type="scientific">Sylvirana guentheri</name>
    <name type="common">Gunther's frog</name>
    <name type="synonym">Rana guentheri</name>
    <dbReference type="NCBI Taxonomy" id="110109"/>
    <lineage>
        <taxon>Eukaryota</taxon>
        <taxon>Metazoa</taxon>
        <taxon>Chordata</taxon>
        <taxon>Craniata</taxon>
        <taxon>Vertebrata</taxon>
        <taxon>Euteleostomi</taxon>
        <taxon>Amphibia</taxon>
        <taxon>Batrachia</taxon>
        <taxon>Anura</taxon>
        <taxon>Neobatrachia</taxon>
        <taxon>Ranoidea</taxon>
        <taxon>Ranidae</taxon>
        <taxon>Sylvirana</taxon>
    </lineage>
</organism>
<reference evidence="3 4" key="1">
    <citation type="journal article" date="2006" name="Peptides">
        <title>Purification and characterization of novel antimicrobial peptides from the skin secretion of Hylarana guentheri.</title>
        <authorList>
            <person name="Zhou J."/>
            <person name="McClean S."/>
            <person name="Thompson A."/>
            <person name="Zhang Y."/>
            <person name="Shaw C."/>
            <person name="Rao P."/>
            <person name="Bjourson A.J."/>
        </authorList>
    </citation>
    <scope>NUCLEOTIDE SEQUENCE [MRNA]</scope>
    <scope>PROTEIN SEQUENCE OF 43-72</scope>
    <scope>FUNCTION</scope>
    <scope>SUBCELLULAR LOCATION</scope>
    <scope>TISSUE SPECIFICITY</scope>
    <scope>DISULFIDE BOND</scope>
    <scope>MASS SPECTROMETRY</scope>
    <source>
        <tissue evidence="2">Skin</tissue>
        <tissue evidence="2">Skin secretion</tissue>
    </source>
</reference>
<sequence>MFTMKKSLLLLFFLGTVSLSLCEQERGADEDDGGEMTEELKRGVITDALKGAAKTVAAELLRKAHCKLTNSC</sequence>
<feature type="signal peptide" evidence="1">
    <location>
        <begin position="1"/>
        <end position="22"/>
    </location>
</feature>
<feature type="propeptide" id="PRO_0000271186" evidence="1 2">
    <location>
        <begin position="23"/>
        <end position="42"/>
    </location>
</feature>
<feature type="peptide" id="PRO_5000147964" description="Brevinin-2GHb" evidence="2">
    <location>
        <begin position="43"/>
        <end position="72"/>
    </location>
</feature>
<feature type="disulfide bond" evidence="2">
    <location>
        <begin position="66"/>
        <end position="72"/>
    </location>
</feature>
<proteinExistence type="evidence at protein level"/>
<protein>
    <recommendedName>
        <fullName>Brevinin-2GHb</fullName>
    </recommendedName>
    <alternativeName>
        <fullName>AMP-2</fullName>
    </alternativeName>
</protein>
<accession>A0AEI5</accession>
<comment type="function">
    <text evidence="2">Antimicrobial peptide. Active against the Gram-positive bacteria S.aureus FDA209P (MIC=16.5 ug/ml) and B.subtilis ATCC 6633 (MIC&gt;64 ug/ml), and the Gram-negative bacteria E.coli O111 (MIC=8.2 ug/ml) and E.coli ATCC 25922 (MIC=8.2 ug/ml). Not active against the fungus C.albicans.</text>
</comment>
<comment type="subcellular location">
    <subcellularLocation>
        <location evidence="2">Secreted</location>
    </subcellularLocation>
</comment>
<comment type="tissue specificity">
    <text evidence="2">Expressed by the skin glands.</text>
</comment>
<comment type="mass spectrometry"/>
<comment type="similarity">
    <text evidence="1">Belongs to the frog skin active peptide (FSAP) family. Brevinin subfamily.</text>
</comment>